<proteinExistence type="inferred from homology"/>
<reference key="1">
    <citation type="journal article" date="2001" name="Proc. Natl. Acad. Sci. U.S.A.">
        <title>Complete genome sequence of Caulobacter crescentus.</title>
        <authorList>
            <person name="Nierman W.C."/>
            <person name="Feldblyum T.V."/>
            <person name="Laub M.T."/>
            <person name="Paulsen I.T."/>
            <person name="Nelson K.E."/>
            <person name="Eisen J.A."/>
            <person name="Heidelberg J.F."/>
            <person name="Alley M.R.K."/>
            <person name="Ohta N."/>
            <person name="Maddock J.R."/>
            <person name="Potocka I."/>
            <person name="Nelson W.C."/>
            <person name="Newton A."/>
            <person name="Stephens C."/>
            <person name="Phadke N.D."/>
            <person name="Ely B."/>
            <person name="DeBoy R.T."/>
            <person name="Dodson R.J."/>
            <person name="Durkin A.S."/>
            <person name="Gwinn M.L."/>
            <person name="Haft D.H."/>
            <person name="Kolonay J.F."/>
            <person name="Smit J."/>
            <person name="Craven M.B."/>
            <person name="Khouri H.M."/>
            <person name="Shetty J."/>
            <person name="Berry K.J."/>
            <person name="Utterback T.R."/>
            <person name="Tran K."/>
            <person name="Wolf A.M."/>
            <person name="Vamathevan J.J."/>
            <person name="Ermolaeva M.D."/>
            <person name="White O."/>
            <person name="Salzberg S.L."/>
            <person name="Venter J.C."/>
            <person name="Shapiro L."/>
            <person name="Fraser C.M."/>
        </authorList>
    </citation>
    <scope>NUCLEOTIDE SEQUENCE [LARGE SCALE GENOMIC DNA]</scope>
    <source>
        <strain>ATCC 19089 / CIP 103742 / CB 15</strain>
    </source>
</reference>
<keyword id="KW-0030">Aminoacyl-tRNA synthetase</keyword>
<keyword id="KW-0067">ATP-binding</keyword>
<keyword id="KW-0175">Coiled coil</keyword>
<keyword id="KW-0963">Cytoplasm</keyword>
<keyword id="KW-0436">Ligase</keyword>
<keyword id="KW-0547">Nucleotide-binding</keyword>
<keyword id="KW-0648">Protein biosynthesis</keyword>
<keyword id="KW-1185">Reference proteome</keyword>
<dbReference type="EC" id="6.1.1.9" evidence="1"/>
<dbReference type="EMBL" id="AE005673">
    <property type="protein sequence ID" value="AAK23301.1"/>
    <property type="molecule type" value="Genomic_DNA"/>
</dbReference>
<dbReference type="PIR" id="A87413">
    <property type="entry name" value="A87413"/>
</dbReference>
<dbReference type="RefSeq" id="NP_420133.1">
    <property type="nucleotide sequence ID" value="NC_002696.2"/>
</dbReference>
<dbReference type="RefSeq" id="WP_010919197.1">
    <property type="nucleotide sequence ID" value="NC_002696.2"/>
</dbReference>
<dbReference type="SMR" id="Q9A8N3"/>
<dbReference type="STRING" id="190650.CC_1320"/>
<dbReference type="EnsemblBacteria" id="AAK23301">
    <property type="protein sequence ID" value="AAK23301"/>
    <property type="gene ID" value="CC_1320"/>
</dbReference>
<dbReference type="KEGG" id="ccr:CC_1320"/>
<dbReference type="PATRIC" id="fig|190650.5.peg.1348"/>
<dbReference type="eggNOG" id="COG0525">
    <property type="taxonomic scope" value="Bacteria"/>
</dbReference>
<dbReference type="HOGENOM" id="CLU_001493_0_2_5"/>
<dbReference type="BioCyc" id="CAULO:CC1320-MONOMER"/>
<dbReference type="Proteomes" id="UP000001816">
    <property type="component" value="Chromosome"/>
</dbReference>
<dbReference type="GO" id="GO:0005829">
    <property type="term" value="C:cytosol"/>
    <property type="evidence" value="ECO:0007669"/>
    <property type="project" value="TreeGrafter"/>
</dbReference>
<dbReference type="GO" id="GO:0002161">
    <property type="term" value="F:aminoacyl-tRNA deacylase activity"/>
    <property type="evidence" value="ECO:0007669"/>
    <property type="project" value="InterPro"/>
</dbReference>
<dbReference type="GO" id="GO:0005524">
    <property type="term" value="F:ATP binding"/>
    <property type="evidence" value="ECO:0007669"/>
    <property type="project" value="UniProtKB-UniRule"/>
</dbReference>
<dbReference type="GO" id="GO:0004832">
    <property type="term" value="F:valine-tRNA ligase activity"/>
    <property type="evidence" value="ECO:0007669"/>
    <property type="project" value="UniProtKB-UniRule"/>
</dbReference>
<dbReference type="GO" id="GO:0006438">
    <property type="term" value="P:valyl-tRNA aminoacylation"/>
    <property type="evidence" value="ECO:0007669"/>
    <property type="project" value="UniProtKB-UniRule"/>
</dbReference>
<dbReference type="CDD" id="cd07962">
    <property type="entry name" value="Anticodon_Ia_Val"/>
    <property type="match status" value="1"/>
</dbReference>
<dbReference type="CDD" id="cd00817">
    <property type="entry name" value="ValRS_core"/>
    <property type="match status" value="1"/>
</dbReference>
<dbReference type="FunFam" id="1.10.287.380:FF:000001">
    <property type="entry name" value="Valine--tRNA ligase"/>
    <property type="match status" value="1"/>
</dbReference>
<dbReference type="FunFam" id="3.40.50.620:FF:000032">
    <property type="entry name" value="Valine--tRNA ligase"/>
    <property type="match status" value="1"/>
</dbReference>
<dbReference type="FunFam" id="3.40.50.620:FF:000078">
    <property type="entry name" value="Valine--tRNA ligase, mitochondrial"/>
    <property type="match status" value="1"/>
</dbReference>
<dbReference type="Gene3D" id="3.40.50.620">
    <property type="entry name" value="HUPs"/>
    <property type="match status" value="2"/>
</dbReference>
<dbReference type="Gene3D" id="1.10.730.10">
    <property type="entry name" value="Isoleucyl-tRNA Synthetase, Domain 1"/>
    <property type="match status" value="1"/>
</dbReference>
<dbReference type="Gene3D" id="1.10.287.380">
    <property type="entry name" value="Valyl-tRNA synthetase, C-terminal domain"/>
    <property type="match status" value="1"/>
</dbReference>
<dbReference type="Gene3D" id="3.90.740.10">
    <property type="entry name" value="Valyl/Leucyl/Isoleucyl-tRNA synthetase, editing domain"/>
    <property type="match status" value="1"/>
</dbReference>
<dbReference type="HAMAP" id="MF_02004">
    <property type="entry name" value="Val_tRNA_synth_type1"/>
    <property type="match status" value="1"/>
</dbReference>
<dbReference type="InterPro" id="IPR001412">
    <property type="entry name" value="aa-tRNA-synth_I_CS"/>
</dbReference>
<dbReference type="InterPro" id="IPR002300">
    <property type="entry name" value="aa-tRNA-synth_Ia"/>
</dbReference>
<dbReference type="InterPro" id="IPR033705">
    <property type="entry name" value="Anticodon_Ia_Val"/>
</dbReference>
<dbReference type="InterPro" id="IPR013155">
    <property type="entry name" value="M/V/L/I-tRNA-synth_anticd-bd"/>
</dbReference>
<dbReference type="InterPro" id="IPR014729">
    <property type="entry name" value="Rossmann-like_a/b/a_fold"/>
</dbReference>
<dbReference type="InterPro" id="IPR010978">
    <property type="entry name" value="tRNA-bd_arm"/>
</dbReference>
<dbReference type="InterPro" id="IPR009080">
    <property type="entry name" value="tRNAsynth_Ia_anticodon-bd"/>
</dbReference>
<dbReference type="InterPro" id="IPR037118">
    <property type="entry name" value="Val-tRNA_synth_C_sf"/>
</dbReference>
<dbReference type="InterPro" id="IPR019499">
    <property type="entry name" value="Val-tRNA_synth_tRNA-bd"/>
</dbReference>
<dbReference type="InterPro" id="IPR009008">
    <property type="entry name" value="Val/Leu/Ile-tRNA-synth_edit"/>
</dbReference>
<dbReference type="InterPro" id="IPR002303">
    <property type="entry name" value="Valyl-tRNA_ligase"/>
</dbReference>
<dbReference type="NCBIfam" id="NF004349">
    <property type="entry name" value="PRK05729.1"/>
    <property type="match status" value="1"/>
</dbReference>
<dbReference type="NCBIfam" id="TIGR00422">
    <property type="entry name" value="valS"/>
    <property type="match status" value="1"/>
</dbReference>
<dbReference type="PANTHER" id="PTHR11946:SF93">
    <property type="entry name" value="VALINE--TRNA LIGASE, CHLOROPLASTIC_MITOCHONDRIAL 2"/>
    <property type="match status" value="1"/>
</dbReference>
<dbReference type="PANTHER" id="PTHR11946">
    <property type="entry name" value="VALYL-TRNA SYNTHETASES"/>
    <property type="match status" value="1"/>
</dbReference>
<dbReference type="Pfam" id="PF08264">
    <property type="entry name" value="Anticodon_1"/>
    <property type="match status" value="1"/>
</dbReference>
<dbReference type="Pfam" id="PF00133">
    <property type="entry name" value="tRNA-synt_1"/>
    <property type="match status" value="1"/>
</dbReference>
<dbReference type="Pfam" id="PF10458">
    <property type="entry name" value="Val_tRNA-synt_C"/>
    <property type="match status" value="1"/>
</dbReference>
<dbReference type="PRINTS" id="PR00986">
    <property type="entry name" value="TRNASYNTHVAL"/>
</dbReference>
<dbReference type="SUPFAM" id="SSF47323">
    <property type="entry name" value="Anticodon-binding domain of a subclass of class I aminoacyl-tRNA synthetases"/>
    <property type="match status" value="1"/>
</dbReference>
<dbReference type="SUPFAM" id="SSF52374">
    <property type="entry name" value="Nucleotidylyl transferase"/>
    <property type="match status" value="1"/>
</dbReference>
<dbReference type="SUPFAM" id="SSF46589">
    <property type="entry name" value="tRNA-binding arm"/>
    <property type="match status" value="1"/>
</dbReference>
<dbReference type="SUPFAM" id="SSF50677">
    <property type="entry name" value="ValRS/IleRS/LeuRS editing domain"/>
    <property type="match status" value="1"/>
</dbReference>
<dbReference type="PROSITE" id="PS00178">
    <property type="entry name" value="AA_TRNA_LIGASE_I"/>
    <property type="match status" value="1"/>
</dbReference>
<evidence type="ECO:0000255" key="1">
    <source>
        <dbReference type="HAMAP-Rule" id="MF_02004"/>
    </source>
</evidence>
<accession>Q9A8N3</accession>
<gene>
    <name evidence="1" type="primary">valS</name>
    <name type="ordered locus">CC_1320</name>
</gene>
<name>SYV_CAUVC</name>
<sequence>MLEKTFDPQSVEPRLYAAWEASGAFKPAEDPNAEPFVIVIPPPNVTGSLHIGHALNNTLQDVLTRFHRMRGKAALWLPGTDHAGIATQMVVERQLAAAGNIGRRDMGREAFVDKVWEWKAESGGAITNQLRRLGASCDWSRERFTLDEGLSAAVRKVFVQLYKQNLLYRDKRLVNWDPQFQTAISDLEVEQKEVDGAYWHFAYPLADGVTYQHPIAFDEDGKATEFETRDYIVVATTRPETMLGDTGVAVHPDDERYKGLVGKFVTLPIVGRRIPIVADDYADPTKGSGAVKITPAHDFNDFGVGKRAGLEAINILTVEAKLNDSVPAEYVGMDRFVARKAIVARAEEEGWLKEIEKTKHMVPHGDRSGVVIEPFLTDQWYVDAKTLAQPALKAVETGETIFEPKHWEKTYFEWLRNIEPWCVSRQLWWGHRIPAWFGPEGSIFVEESEEAAYAAARAQFGADVQLTQDEDVLDTWFSSALWPFSTLGWPEKTSDLERFYPTSTLVTGFDIIFFWVARMMMMGIHFMGEAPFKQVFINALVRDEKGAKMSKSKGNVMDPLILIDELGCDAVRFTLTAMSGQARDIKLSKQRIEGYRNFGTKLWNASRFAQMNECVRVEGFDPSTVQQPINKWIRGETVKTVAEVTKALEAPSFDEAAGALYRFVWNVFCDWYLELAKPILNGDDAAAKAETRATAAWALDVILKLLHPVMPFITEELWEKTAEFGPARETMLISAKWPELPADWIDAEAEAEIGWLVETVGEIRSIRAEMNVPPSAKPGLTIVGAGPETKARLARHRDLLLTLARLDAVREADAAPAGSAPVVMGEATGALGVAEFIDVAAEKARLTKDIAGHAGEIEKVNKKLGNPDFLARAKEEVVEENRERLAEAEAAKAKLEAALSRLASVG</sequence>
<feature type="chain" id="PRO_0000224456" description="Valine--tRNA ligase">
    <location>
        <begin position="1"/>
        <end position="906"/>
    </location>
</feature>
<feature type="coiled-coil region" evidence="1">
    <location>
        <begin position="842"/>
        <end position="905"/>
    </location>
</feature>
<feature type="short sequence motif" description="'HIGH' region">
    <location>
        <begin position="43"/>
        <end position="53"/>
    </location>
</feature>
<feature type="short sequence motif" description="'KMSKS' region">
    <location>
        <begin position="548"/>
        <end position="552"/>
    </location>
</feature>
<feature type="binding site" evidence="1">
    <location>
        <position position="551"/>
    </location>
    <ligand>
        <name>ATP</name>
        <dbReference type="ChEBI" id="CHEBI:30616"/>
    </ligand>
</feature>
<organism>
    <name type="scientific">Caulobacter vibrioides (strain ATCC 19089 / CIP 103742 / CB 15)</name>
    <name type="common">Caulobacter crescentus</name>
    <dbReference type="NCBI Taxonomy" id="190650"/>
    <lineage>
        <taxon>Bacteria</taxon>
        <taxon>Pseudomonadati</taxon>
        <taxon>Pseudomonadota</taxon>
        <taxon>Alphaproteobacteria</taxon>
        <taxon>Caulobacterales</taxon>
        <taxon>Caulobacteraceae</taxon>
        <taxon>Caulobacter</taxon>
    </lineage>
</organism>
<comment type="function">
    <text evidence="1">Catalyzes the attachment of valine to tRNA(Val). As ValRS can inadvertently accommodate and process structurally similar amino acids such as threonine, to avoid such errors, it has a 'posttransfer' editing activity that hydrolyzes mischarged Thr-tRNA(Val) in a tRNA-dependent manner.</text>
</comment>
<comment type="catalytic activity">
    <reaction evidence="1">
        <text>tRNA(Val) + L-valine + ATP = L-valyl-tRNA(Val) + AMP + diphosphate</text>
        <dbReference type="Rhea" id="RHEA:10704"/>
        <dbReference type="Rhea" id="RHEA-COMP:9672"/>
        <dbReference type="Rhea" id="RHEA-COMP:9708"/>
        <dbReference type="ChEBI" id="CHEBI:30616"/>
        <dbReference type="ChEBI" id="CHEBI:33019"/>
        <dbReference type="ChEBI" id="CHEBI:57762"/>
        <dbReference type="ChEBI" id="CHEBI:78442"/>
        <dbReference type="ChEBI" id="CHEBI:78537"/>
        <dbReference type="ChEBI" id="CHEBI:456215"/>
        <dbReference type="EC" id="6.1.1.9"/>
    </reaction>
</comment>
<comment type="subunit">
    <text evidence="1">Monomer.</text>
</comment>
<comment type="subcellular location">
    <subcellularLocation>
        <location evidence="1">Cytoplasm</location>
    </subcellularLocation>
</comment>
<comment type="domain">
    <text evidence="1">ValRS has two distinct active sites: one for aminoacylation and one for editing. The misactivated threonine is translocated from the active site to the editing site.</text>
</comment>
<comment type="domain">
    <text evidence="1">The C-terminal coiled-coil domain is crucial for aminoacylation activity.</text>
</comment>
<comment type="similarity">
    <text evidence="1">Belongs to the class-I aminoacyl-tRNA synthetase family. ValS type 1 subfamily.</text>
</comment>
<protein>
    <recommendedName>
        <fullName evidence="1">Valine--tRNA ligase</fullName>
        <ecNumber evidence="1">6.1.1.9</ecNumber>
    </recommendedName>
    <alternativeName>
        <fullName evidence="1">Valyl-tRNA synthetase</fullName>
        <shortName evidence="1">ValRS</shortName>
    </alternativeName>
</protein>